<feature type="chain" id="PRO_0000154017" description="TATA-box-binding protein">
    <location>
        <begin position="1"/>
        <end position="191"/>
    </location>
</feature>
<feature type="repeat" description="1">
    <location>
        <begin position="11"/>
        <end position="87"/>
    </location>
</feature>
<feature type="repeat" description="2">
    <location>
        <begin position="102"/>
        <end position="178"/>
    </location>
</feature>
<comment type="function">
    <text evidence="1">General factor that plays a role in the activation of archaeal genes transcribed by RNA polymerase. Binds specifically to the TATA box promoter element which lies close to the position of transcription initiation (By similarity).</text>
</comment>
<comment type="similarity">
    <text evidence="2">Belongs to the TBP family.</text>
</comment>
<sequence>MVDTNNVKLRIENIVASVDLFAQLDLEKVLDICPNSKYNPEEFPGIICRFDDPKVALLIFSSGKLVVTGAKSIHDIERAVAKLIEKLKGIGVKFKRAPLIDIQNMVFSGDIGREFNLDNVALTLPNCEYEPEQFPGVIYRVKDPRAVILLFSSGKIVCSGAKSEADAWEAVRKLLRELEKYGLIEEEEEEL</sequence>
<reference key="1">
    <citation type="journal article" date="2003" name="Mol. Microbiol.">
        <title>An integrated analysis of the genome of the hyperthermophilic archaeon Pyrococcus abyssi.</title>
        <authorList>
            <person name="Cohen G.N."/>
            <person name="Barbe V."/>
            <person name="Flament D."/>
            <person name="Galperin M."/>
            <person name="Heilig R."/>
            <person name="Lecompte O."/>
            <person name="Poch O."/>
            <person name="Prieur D."/>
            <person name="Querellou J."/>
            <person name="Ripp R."/>
            <person name="Thierry J.-C."/>
            <person name="Van der Oost J."/>
            <person name="Weissenbach J."/>
            <person name="Zivanovic Y."/>
            <person name="Forterre P."/>
        </authorList>
    </citation>
    <scope>NUCLEOTIDE SEQUENCE [LARGE SCALE GENOMIC DNA]</scope>
    <source>
        <strain>GE5 / Orsay</strain>
    </source>
</reference>
<reference key="2">
    <citation type="journal article" date="2012" name="Curr. Microbiol.">
        <title>Re-annotation of two hyperthermophilic archaea Pyrococcus abyssi GE5 and Pyrococcus furiosus DSM 3638.</title>
        <authorList>
            <person name="Gao J."/>
            <person name="Wang J."/>
        </authorList>
    </citation>
    <scope>GENOME REANNOTATION</scope>
    <source>
        <strain>GE5 / Orsay</strain>
    </source>
</reference>
<dbReference type="EMBL" id="AJ248286">
    <property type="protein sequence ID" value="CAB49882.1"/>
    <property type="molecule type" value="Genomic_DNA"/>
</dbReference>
<dbReference type="EMBL" id="HE613800">
    <property type="protein sequence ID" value="CCE70380.1"/>
    <property type="molecule type" value="Genomic_DNA"/>
</dbReference>
<dbReference type="PIR" id="E75072">
    <property type="entry name" value="E75072"/>
</dbReference>
<dbReference type="RefSeq" id="WP_010868091.1">
    <property type="nucleotide sequence ID" value="NC_000868.1"/>
</dbReference>
<dbReference type="SMR" id="Q9V024"/>
<dbReference type="STRING" id="272844.PAB1726"/>
<dbReference type="KEGG" id="pab:PAB1726"/>
<dbReference type="PATRIC" id="fig|272844.11.peg.1026"/>
<dbReference type="eggNOG" id="arCOG01764">
    <property type="taxonomic scope" value="Archaea"/>
</dbReference>
<dbReference type="HOGENOM" id="CLU_060161_4_3_2"/>
<dbReference type="OrthoDB" id="350539at2157"/>
<dbReference type="PhylomeDB" id="Q9V024"/>
<dbReference type="Proteomes" id="UP000000810">
    <property type="component" value="Chromosome"/>
</dbReference>
<dbReference type="Proteomes" id="UP000009139">
    <property type="component" value="Chromosome"/>
</dbReference>
<dbReference type="GO" id="GO:0003677">
    <property type="term" value="F:DNA binding"/>
    <property type="evidence" value="ECO:0007669"/>
    <property type="project" value="UniProtKB-KW"/>
</dbReference>
<dbReference type="GO" id="GO:0003700">
    <property type="term" value="F:DNA-binding transcription factor activity"/>
    <property type="evidence" value="ECO:0007669"/>
    <property type="project" value="UniProtKB-UniRule"/>
</dbReference>
<dbReference type="GO" id="GO:0006352">
    <property type="term" value="P:DNA-templated transcription initiation"/>
    <property type="evidence" value="ECO:0007669"/>
    <property type="project" value="InterPro"/>
</dbReference>
<dbReference type="CDD" id="cd04518">
    <property type="entry name" value="TBP_archaea"/>
    <property type="match status" value="1"/>
</dbReference>
<dbReference type="FunFam" id="3.30.310.10:FF:000007">
    <property type="entry name" value="TATA-box-binding protein"/>
    <property type="match status" value="1"/>
</dbReference>
<dbReference type="FunFam" id="3.30.310.10:FF:000010">
    <property type="entry name" value="TATA-box-binding protein"/>
    <property type="match status" value="1"/>
</dbReference>
<dbReference type="Gene3D" id="3.30.310.10">
    <property type="entry name" value="TATA-Binding Protein"/>
    <property type="match status" value="2"/>
</dbReference>
<dbReference type="HAMAP" id="MF_00408">
    <property type="entry name" value="TATA_bind_prot_arch"/>
    <property type="match status" value="1"/>
</dbReference>
<dbReference type="InterPro" id="IPR000814">
    <property type="entry name" value="TBP"/>
</dbReference>
<dbReference type="InterPro" id="IPR033711">
    <property type="entry name" value="TBP_archaea"/>
</dbReference>
<dbReference type="InterPro" id="IPR030491">
    <property type="entry name" value="TBP_CS"/>
</dbReference>
<dbReference type="InterPro" id="IPR012295">
    <property type="entry name" value="TBP_dom_sf"/>
</dbReference>
<dbReference type="NCBIfam" id="NF001593">
    <property type="entry name" value="PRK00394.1-2"/>
    <property type="match status" value="1"/>
</dbReference>
<dbReference type="NCBIfam" id="NF001594">
    <property type="entry name" value="PRK00394.1-3"/>
    <property type="match status" value="1"/>
</dbReference>
<dbReference type="PANTHER" id="PTHR10126">
    <property type="entry name" value="TATA-BOX BINDING PROTEIN"/>
    <property type="match status" value="1"/>
</dbReference>
<dbReference type="Pfam" id="PF00352">
    <property type="entry name" value="TBP"/>
    <property type="match status" value="2"/>
</dbReference>
<dbReference type="PRINTS" id="PR00686">
    <property type="entry name" value="TIFACTORIID"/>
</dbReference>
<dbReference type="SUPFAM" id="SSF55945">
    <property type="entry name" value="TATA-box binding protein-like"/>
    <property type="match status" value="2"/>
</dbReference>
<dbReference type="PROSITE" id="PS00351">
    <property type="entry name" value="TFIID"/>
    <property type="match status" value="2"/>
</dbReference>
<protein>
    <recommendedName>
        <fullName>TATA-box-binding protein</fullName>
    </recommendedName>
    <alternativeName>
        <fullName>Box A-binding protein</fullName>
        <shortName>BAP</shortName>
    </alternativeName>
    <alternativeName>
        <fullName>TATA sequence-binding protein</fullName>
        <shortName>TBP</shortName>
    </alternativeName>
    <alternativeName>
        <fullName>TATA-box factor</fullName>
    </alternativeName>
</protein>
<accession>Q9V024</accession>
<accession>G8ZID9</accession>
<organism>
    <name type="scientific">Pyrococcus abyssi (strain GE5 / Orsay)</name>
    <dbReference type="NCBI Taxonomy" id="272844"/>
    <lineage>
        <taxon>Archaea</taxon>
        <taxon>Methanobacteriati</taxon>
        <taxon>Methanobacteriota</taxon>
        <taxon>Thermococci</taxon>
        <taxon>Thermococcales</taxon>
        <taxon>Thermococcaceae</taxon>
        <taxon>Pyrococcus</taxon>
    </lineage>
</organism>
<keyword id="KW-0238">DNA-binding</keyword>
<keyword id="KW-0677">Repeat</keyword>
<keyword id="KW-0804">Transcription</keyword>
<keyword id="KW-0805">Transcription regulation</keyword>
<name>TBP_PYRAB</name>
<proteinExistence type="inferred from homology"/>
<evidence type="ECO:0000250" key="1"/>
<evidence type="ECO:0000305" key="2"/>
<gene>
    <name type="primary">tbp</name>
    <name type="ordered locus">PYRAB09740</name>
    <name type="ORF">PAB1726</name>
</gene>